<name>Y232_SYNY3</name>
<keyword id="KW-1003">Cell membrane</keyword>
<keyword id="KW-0472">Membrane</keyword>
<keyword id="KW-1185">Reference proteome</keyword>
<keyword id="KW-0812">Transmembrane</keyword>
<keyword id="KW-1133">Transmembrane helix</keyword>
<accession>Q55705</accession>
<dbReference type="EMBL" id="BA000022">
    <property type="protein sequence ID" value="BAA10237.1"/>
    <property type="molecule type" value="Genomic_DNA"/>
</dbReference>
<dbReference type="PIR" id="S76385">
    <property type="entry name" value="S76385"/>
</dbReference>
<dbReference type="IntAct" id="Q55705">
    <property type="interactions" value="2"/>
</dbReference>
<dbReference type="STRING" id="1148.gene:10499736"/>
<dbReference type="PaxDb" id="1148-1001609"/>
<dbReference type="DNASU" id="952086"/>
<dbReference type="EnsemblBacteria" id="BAA10237">
    <property type="protein sequence ID" value="BAA10237"/>
    <property type="gene ID" value="BAA10237"/>
</dbReference>
<dbReference type="KEGG" id="syn:slr0232"/>
<dbReference type="eggNOG" id="COG0586">
    <property type="taxonomic scope" value="Bacteria"/>
</dbReference>
<dbReference type="InParanoid" id="Q55705"/>
<dbReference type="PhylomeDB" id="Q55705"/>
<dbReference type="Proteomes" id="UP000001425">
    <property type="component" value="Chromosome"/>
</dbReference>
<dbReference type="GO" id="GO:0005886">
    <property type="term" value="C:plasma membrane"/>
    <property type="evidence" value="ECO:0007669"/>
    <property type="project" value="UniProtKB-SubCell"/>
</dbReference>
<dbReference type="InterPro" id="IPR051311">
    <property type="entry name" value="DedA_domain"/>
</dbReference>
<dbReference type="InterPro" id="IPR032816">
    <property type="entry name" value="VTT_dom"/>
</dbReference>
<dbReference type="PANTHER" id="PTHR42709">
    <property type="entry name" value="ALKALINE PHOSPHATASE LIKE PROTEIN"/>
    <property type="match status" value="1"/>
</dbReference>
<dbReference type="PANTHER" id="PTHR42709:SF6">
    <property type="entry name" value="UNDECAPRENYL PHOSPHATE TRANSPORTER A"/>
    <property type="match status" value="1"/>
</dbReference>
<dbReference type="Pfam" id="PF09335">
    <property type="entry name" value="VTT_dom"/>
    <property type="match status" value="1"/>
</dbReference>
<proteinExistence type="inferred from homology"/>
<organism>
    <name type="scientific">Synechocystis sp. (strain ATCC 27184 / PCC 6803 / Kazusa)</name>
    <dbReference type="NCBI Taxonomy" id="1111708"/>
    <lineage>
        <taxon>Bacteria</taxon>
        <taxon>Bacillati</taxon>
        <taxon>Cyanobacteriota</taxon>
        <taxon>Cyanophyceae</taxon>
        <taxon>Synechococcales</taxon>
        <taxon>Merismopediaceae</taxon>
        <taxon>Synechocystis</taxon>
    </lineage>
</organism>
<protein>
    <recommendedName>
        <fullName>Uncharacterized membrane protein slr0232</fullName>
    </recommendedName>
</protein>
<gene>
    <name type="ordered locus">slr0232</name>
</gene>
<evidence type="ECO:0000255" key="1"/>
<evidence type="ECO:0000305" key="2"/>
<sequence length="218" mass="23782">MGWEFFSLETLQELARQYGYGAVFFGIALENAGIPIPGETITLLGGFLAGSGDLSYGGVLIAAIAGAVLGDSCGYWVGRWGGWPLLTRAAQLFNIPQEKLDQARHKFSQNGAAAVFFGRFVTLLRIFAGPMAGIVRMPYGKFLLYNIGGASVWAAITVSLAYFLGRVVTIEQIIAWTTQFSWFALAAVVGMVGIYFVFHFLQKRFDQTIESTIGDRPQ</sequence>
<feature type="chain" id="PRO_0000161432" description="Uncharacterized membrane protein slr0232">
    <location>
        <begin position="1"/>
        <end position="218"/>
    </location>
</feature>
<feature type="transmembrane region" description="Helical" evidence="1">
    <location>
        <begin position="27"/>
        <end position="49"/>
    </location>
</feature>
<feature type="transmembrane region" description="Helical" evidence="1">
    <location>
        <begin position="57"/>
        <end position="77"/>
    </location>
</feature>
<feature type="transmembrane region" description="Helical" evidence="1">
    <location>
        <begin position="115"/>
        <end position="135"/>
    </location>
</feature>
<feature type="transmembrane region" description="Helical" evidence="1">
    <location>
        <begin position="142"/>
        <end position="162"/>
    </location>
</feature>
<feature type="transmembrane region" description="Helical" evidence="1">
    <location>
        <begin position="180"/>
        <end position="200"/>
    </location>
</feature>
<reference key="1">
    <citation type="journal article" date="1995" name="DNA Res.">
        <title>Sequence analysis of the genome of the unicellular cyanobacterium Synechocystis sp. strain PCC6803. I. Sequence features in the 1 Mb region from map positions 64% to 92% of the genome.</title>
        <authorList>
            <person name="Kaneko T."/>
            <person name="Tanaka A."/>
            <person name="Sato S."/>
            <person name="Kotani H."/>
            <person name="Sazuka T."/>
            <person name="Miyajima N."/>
            <person name="Sugiura M."/>
            <person name="Tabata S."/>
        </authorList>
    </citation>
    <scope>NUCLEOTIDE SEQUENCE [LARGE SCALE GENOMIC DNA]</scope>
    <source>
        <strain>ATCC 27184 / PCC 6803 / N-1</strain>
    </source>
</reference>
<reference key="2">
    <citation type="journal article" date="1996" name="DNA Res.">
        <title>Sequence analysis of the genome of the unicellular cyanobacterium Synechocystis sp. strain PCC6803. II. Sequence determination of the entire genome and assignment of potential protein-coding regions.</title>
        <authorList>
            <person name="Kaneko T."/>
            <person name="Sato S."/>
            <person name="Kotani H."/>
            <person name="Tanaka A."/>
            <person name="Asamizu E."/>
            <person name="Nakamura Y."/>
            <person name="Miyajima N."/>
            <person name="Hirosawa M."/>
            <person name="Sugiura M."/>
            <person name="Sasamoto S."/>
            <person name="Kimura T."/>
            <person name="Hosouchi T."/>
            <person name="Matsuno A."/>
            <person name="Muraki A."/>
            <person name="Nakazaki N."/>
            <person name="Naruo K."/>
            <person name="Okumura S."/>
            <person name="Shimpo S."/>
            <person name="Takeuchi C."/>
            <person name="Wada T."/>
            <person name="Watanabe A."/>
            <person name="Yamada M."/>
            <person name="Yasuda M."/>
            <person name="Tabata S."/>
        </authorList>
    </citation>
    <scope>NUCLEOTIDE SEQUENCE [LARGE SCALE GENOMIC DNA]</scope>
    <source>
        <strain>ATCC 27184 / PCC 6803 / Kazusa</strain>
    </source>
</reference>
<comment type="subcellular location">
    <subcellularLocation>
        <location evidence="2">Cell membrane</location>
        <topology evidence="2">Multi-pass membrane protein</topology>
    </subcellularLocation>
</comment>
<comment type="similarity">
    <text evidence="2">Belongs to the DedA family.</text>
</comment>